<gene>
    <name evidence="1" type="primary">proS</name>
    <name type="ordered locus">Plav_3205</name>
</gene>
<proteinExistence type="inferred from homology"/>
<dbReference type="EC" id="6.1.1.15" evidence="1"/>
<dbReference type="EMBL" id="CP000774">
    <property type="protein sequence ID" value="ABS64811.1"/>
    <property type="molecule type" value="Genomic_DNA"/>
</dbReference>
<dbReference type="RefSeq" id="WP_012112137.1">
    <property type="nucleotide sequence ID" value="NC_009719.1"/>
</dbReference>
<dbReference type="SMR" id="A7HY28"/>
<dbReference type="STRING" id="402881.Plav_3205"/>
<dbReference type="KEGG" id="pla:Plav_3205"/>
<dbReference type="eggNOG" id="COG0442">
    <property type="taxonomic scope" value="Bacteria"/>
</dbReference>
<dbReference type="HOGENOM" id="CLU_016739_4_2_5"/>
<dbReference type="OrthoDB" id="9809052at2"/>
<dbReference type="Proteomes" id="UP000006377">
    <property type="component" value="Chromosome"/>
</dbReference>
<dbReference type="GO" id="GO:0005829">
    <property type="term" value="C:cytosol"/>
    <property type="evidence" value="ECO:0007669"/>
    <property type="project" value="TreeGrafter"/>
</dbReference>
<dbReference type="GO" id="GO:0005524">
    <property type="term" value="F:ATP binding"/>
    <property type="evidence" value="ECO:0007669"/>
    <property type="project" value="UniProtKB-UniRule"/>
</dbReference>
<dbReference type="GO" id="GO:0004827">
    <property type="term" value="F:proline-tRNA ligase activity"/>
    <property type="evidence" value="ECO:0007669"/>
    <property type="project" value="UniProtKB-UniRule"/>
</dbReference>
<dbReference type="GO" id="GO:0006433">
    <property type="term" value="P:prolyl-tRNA aminoacylation"/>
    <property type="evidence" value="ECO:0007669"/>
    <property type="project" value="UniProtKB-UniRule"/>
</dbReference>
<dbReference type="CDD" id="cd00861">
    <property type="entry name" value="ProRS_anticodon_short"/>
    <property type="match status" value="1"/>
</dbReference>
<dbReference type="CDD" id="cd00779">
    <property type="entry name" value="ProRS_core_prok"/>
    <property type="match status" value="1"/>
</dbReference>
<dbReference type="FunFam" id="3.30.930.10:FF:000042">
    <property type="entry name" value="probable proline--tRNA ligase, mitochondrial"/>
    <property type="match status" value="1"/>
</dbReference>
<dbReference type="FunFam" id="3.40.50.800:FF:000032">
    <property type="entry name" value="Proline--tRNA ligase"/>
    <property type="match status" value="1"/>
</dbReference>
<dbReference type="Gene3D" id="3.40.50.800">
    <property type="entry name" value="Anticodon-binding domain"/>
    <property type="match status" value="1"/>
</dbReference>
<dbReference type="Gene3D" id="3.30.930.10">
    <property type="entry name" value="Bira Bifunctional Protein, Domain 2"/>
    <property type="match status" value="1"/>
</dbReference>
<dbReference type="HAMAP" id="MF_01570">
    <property type="entry name" value="Pro_tRNA_synth_type2"/>
    <property type="match status" value="1"/>
</dbReference>
<dbReference type="InterPro" id="IPR002314">
    <property type="entry name" value="aa-tRNA-synt_IIb"/>
</dbReference>
<dbReference type="InterPro" id="IPR006195">
    <property type="entry name" value="aa-tRNA-synth_II"/>
</dbReference>
<dbReference type="InterPro" id="IPR045864">
    <property type="entry name" value="aa-tRNA-synth_II/BPL/LPL"/>
</dbReference>
<dbReference type="InterPro" id="IPR004154">
    <property type="entry name" value="Anticodon-bd"/>
</dbReference>
<dbReference type="InterPro" id="IPR036621">
    <property type="entry name" value="Anticodon-bd_dom_sf"/>
</dbReference>
<dbReference type="InterPro" id="IPR002316">
    <property type="entry name" value="Pro-tRNA-ligase_IIa"/>
</dbReference>
<dbReference type="InterPro" id="IPR004500">
    <property type="entry name" value="Pro-tRNA-synth_IIa_bac-type"/>
</dbReference>
<dbReference type="InterPro" id="IPR050062">
    <property type="entry name" value="Pro-tRNA_synthetase"/>
</dbReference>
<dbReference type="InterPro" id="IPR023716">
    <property type="entry name" value="Prolyl-tRNA_ligase_IIa_type2"/>
</dbReference>
<dbReference type="InterPro" id="IPR044140">
    <property type="entry name" value="ProRS_anticodon_short"/>
</dbReference>
<dbReference type="InterPro" id="IPR033730">
    <property type="entry name" value="ProRS_core_prok"/>
</dbReference>
<dbReference type="NCBIfam" id="NF008979">
    <property type="entry name" value="PRK12325.1"/>
    <property type="match status" value="1"/>
</dbReference>
<dbReference type="NCBIfam" id="TIGR00409">
    <property type="entry name" value="proS_fam_II"/>
    <property type="match status" value="1"/>
</dbReference>
<dbReference type="PANTHER" id="PTHR42753">
    <property type="entry name" value="MITOCHONDRIAL RIBOSOME PROTEIN L39/PROLYL-TRNA LIGASE FAMILY MEMBER"/>
    <property type="match status" value="1"/>
</dbReference>
<dbReference type="PANTHER" id="PTHR42753:SF2">
    <property type="entry name" value="PROLINE--TRNA LIGASE"/>
    <property type="match status" value="1"/>
</dbReference>
<dbReference type="Pfam" id="PF03129">
    <property type="entry name" value="HGTP_anticodon"/>
    <property type="match status" value="1"/>
</dbReference>
<dbReference type="Pfam" id="PF00587">
    <property type="entry name" value="tRNA-synt_2b"/>
    <property type="match status" value="1"/>
</dbReference>
<dbReference type="PRINTS" id="PR01046">
    <property type="entry name" value="TRNASYNTHPRO"/>
</dbReference>
<dbReference type="SUPFAM" id="SSF52954">
    <property type="entry name" value="Class II aaRS ABD-related"/>
    <property type="match status" value="1"/>
</dbReference>
<dbReference type="SUPFAM" id="SSF55681">
    <property type="entry name" value="Class II aaRS and biotin synthetases"/>
    <property type="match status" value="1"/>
</dbReference>
<dbReference type="PROSITE" id="PS50862">
    <property type="entry name" value="AA_TRNA_LIGASE_II"/>
    <property type="match status" value="1"/>
</dbReference>
<evidence type="ECO:0000255" key="1">
    <source>
        <dbReference type="HAMAP-Rule" id="MF_01570"/>
    </source>
</evidence>
<protein>
    <recommendedName>
        <fullName evidence="1">Proline--tRNA ligase</fullName>
        <ecNumber evidence="1">6.1.1.15</ecNumber>
    </recommendedName>
    <alternativeName>
        <fullName evidence="1">Prolyl-tRNA synthetase</fullName>
        <shortName evidence="1">ProRS</shortName>
    </alternativeName>
</protein>
<organism>
    <name type="scientific">Parvibaculum lavamentivorans (strain DS-1 / DSM 13023 / NCIMB 13966)</name>
    <dbReference type="NCBI Taxonomy" id="402881"/>
    <lineage>
        <taxon>Bacteria</taxon>
        <taxon>Pseudomonadati</taxon>
        <taxon>Pseudomonadota</taxon>
        <taxon>Alphaproteobacteria</taxon>
        <taxon>Hyphomicrobiales</taxon>
        <taxon>Parvibaculaceae</taxon>
        <taxon>Parvibaculum</taxon>
    </lineage>
</organism>
<comment type="function">
    <text evidence="1">Catalyzes the attachment of proline to tRNA(Pro) in a two-step reaction: proline is first activated by ATP to form Pro-AMP and then transferred to the acceptor end of tRNA(Pro).</text>
</comment>
<comment type="catalytic activity">
    <reaction evidence="1">
        <text>tRNA(Pro) + L-proline + ATP = L-prolyl-tRNA(Pro) + AMP + diphosphate</text>
        <dbReference type="Rhea" id="RHEA:14305"/>
        <dbReference type="Rhea" id="RHEA-COMP:9700"/>
        <dbReference type="Rhea" id="RHEA-COMP:9702"/>
        <dbReference type="ChEBI" id="CHEBI:30616"/>
        <dbReference type="ChEBI" id="CHEBI:33019"/>
        <dbReference type="ChEBI" id="CHEBI:60039"/>
        <dbReference type="ChEBI" id="CHEBI:78442"/>
        <dbReference type="ChEBI" id="CHEBI:78532"/>
        <dbReference type="ChEBI" id="CHEBI:456215"/>
        <dbReference type="EC" id="6.1.1.15"/>
    </reaction>
</comment>
<comment type="subunit">
    <text evidence="1">Homodimer.</text>
</comment>
<comment type="subcellular location">
    <subcellularLocation>
        <location evidence="1">Cytoplasm</location>
    </subcellularLocation>
</comment>
<comment type="similarity">
    <text evidence="1">Belongs to the class-II aminoacyl-tRNA synthetase family. ProS type 2 subfamily.</text>
</comment>
<keyword id="KW-0030">Aminoacyl-tRNA synthetase</keyword>
<keyword id="KW-0067">ATP-binding</keyword>
<keyword id="KW-0963">Cytoplasm</keyword>
<keyword id="KW-0436">Ligase</keyword>
<keyword id="KW-0547">Nucleotide-binding</keyword>
<keyword id="KW-0648">Protein biosynthesis</keyword>
<keyword id="KW-1185">Reference proteome</keyword>
<reference key="1">
    <citation type="journal article" date="2011" name="Stand. Genomic Sci.">
        <title>Complete genome sequence of Parvibaculum lavamentivorans type strain (DS-1(T)).</title>
        <authorList>
            <person name="Schleheck D."/>
            <person name="Weiss M."/>
            <person name="Pitluck S."/>
            <person name="Bruce D."/>
            <person name="Land M.L."/>
            <person name="Han S."/>
            <person name="Saunders E."/>
            <person name="Tapia R."/>
            <person name="Detter C."/>
            <person name="Brettin T."/>
            <person name="Han J."/>
            <person name="Woyke T."/>
            <person name="Goodwin L."/>
            <person name="Pennacchio L."/>
            <person name="Nolan M."/>
            <person name="Cook A.M."/>
            <person name="Kjelleberg S."/>
            <person name="Thomas T."/>
        </authorList>
    </citation>
    <scope>NUCLEOTIDE SEQUENCE [LARGE SCALE GENOMIC DNA]</scope>
    <source>
        <strain>DS-1 / DSM 13023 / NCIMB 13966</strain>
    </source>
</reference>
<name>SYP_PARL1</name>
<sequence>MRLSRYFLPTLKENPAEAQIASHRLMLRAGMVRQTAAGIYAWLPLGLAVLRKIEGIVRDEQKRAGAIELLMPTLQSADLWRQSGRYDAYGPEMLRIVDRHERDMLYGPTNEEMITDIFRGAVRSYRDLPRNLFHIQWKFRDEIRPRFGVMRGREFLMKDGYSFDLDVEGARRAYRKMFVSYLRSFARMGLKAIPMAADTGPIGGDMSHEFIILAETGESAVFCHRDLVDMAVPGDDIDYETDLNPVIAARTDLYAATDEKHDAAKFDAEVPKDKQLSARGIEVGHIFFFGTKYSQSMGALVTGPDGKEVPVQMGSYGIGVSRLVGAIIEASHDDAGIVWPDAVAPFTVGLINLKSGDAETDAACESIYEKLTAQGIDVLYDDTDERAGAKFSNMDLIGLPWQLVIGPRGLKSGTVELKRRATGEKEELSPEAALAKIAG</sequence>
<feature type="chain" id="PRO_1000073595" description="Proline--tRNA ligase">
    <location>
        <begin position="1"/>
        <end position="439"/>
    </location>
</feature>
<accession>A7HY28</accession>